<accession>P74309</accession>
<proteinExistence type="inferred from homology"/>
<feature type="chain" id="PRO_0000216913" description="Fructose-bisphosphate aldolase class 1">
    <location>
        <begin position="1"/>
        <end position="300"/>
    </location>
</feature>
<feature type="active site" description="Proton acceptor" evidence="1">
    <location>
        <position position="181"/>
    </location>
</feature>
<feature type="active site" description="Schiff-base intermediate with dihydroxyacetone-P" evidence="1">
    <location>
        <position position="218"/>
    </location>
</feature>
<gene>
    <name type="primary">fda</name>
    <name type="synonym">fbaB</name>
    <name type="ordered locus">slr0943</name>
</gene>
<keyword id="KW-0324">Glycolysis</keyword>
<keyword id="KW-0456">Lyase</keyword>
<keyword id="KW-1185">Reference proteome</keyword>
<keyword id="KW-0704">Schiff base</keyword>
<sequence length="300" mass="33149">MMTLEPNQEQLKKMKSHPGFIAALDQSGGSTPGALADYGIEPNTYSGDDQMFALVHQMRTRIMTSPGFTGDRILAAILFEDTMNREVDGEPTANYLWQNKQIVPILKVDKGLAQEKDGSQLMKPIPQLDSLLMKAKKKGIFGTKMRSFIKHANPAGIEAIVDQQFELAQQIIAAGLVPIIEPEVDIHCSEKAQAEALLKQAMLKHLNQLPKGQWVMLKLTLPEQDNLYSNCIEHANVLRVVALSGGYSQAEANERLSRNHGVIASFSRALTEGLTAQQTDAEFNTMLDESIEKIYQASIT</sequence>
<comment type="catalytic activity">
    <reaction>
        <text>beta-D-fructose 1,6-bisphosphate = D-glyceraldehyde 3-phosphate + dihydroxyacetone phosphate</text>
        <dbReference type="Rhea" id="RHEA:14729"/>
        <dbReference type="ChEBI" id="CHEBI:32966"/>
        <dbReference type="ChEBI" id="CHEBI:57642"/>
        <dbReference type="ChEBI" id="CHEBI:59776"/>
        <dbReference type="EC" id="4.1.2.13"/>
    </reaction>
</comment>
<comment type="pathway">
    <text>Carbohydrate degradation; glycolysis; D-glyceraldehyde 3-phosphate and glycerone phosphate from D-glucose: step 4/4.</text>
</comment>
<comment type="similarity">
    <text evidence="2">Belongs to the class I fructose-bisphosphate aldolase family.</text>
</comment>
<evidence type="ECO:0000250" key="1"/>
<evidence type="ECO:0000305" key="2"/>
<organism>
    <name type="scientific">Synechocystis sp. (strain ATCC 27184 / PCC 6803 / Kazusa)</name>
    <dbReference type="NCBI Taxonomy" id="1111708"/>
    <lineage>
        <taxon>Bacteria</taxon>
        <taxon>Bacillati</taxon>
        <taxon>Cyanobacteriota</taxon>
        <taxon>Cyanophyceae</taxon>
        <taxon>Synechococcales</taxon>
        <taxon>Merismopediaceae</taxon>
        <taxon>Synechocystis</taxon>
    </lineage>
</organism>
<protein>
    <recommendedName>
        <fullName>Fructose-bisphosphate aldolase class 1</fullName>
        <ecNumber>4.1.2.13</ecNumber>
    </recommendedName>
    <alternativeName>
        <fullName>Fructose-bisphosphate aldolase class I</fullName>
        <shortName>FBP aldolase</shortName>
    </alternativeName>
</protein>
<name>ALF1_SYNY3</name>
<reference key="1">
    <citation type="journal article" date="1996" name="DNA Res.">
        <title>Sequence analysis of the genome of the unicellular cyanobacterium Synechocystis sp. strain PCC6803. II. Sequence determination of the entire genome and assignment of potential protein-coding regions.</title>
        <authorList>
            <person name="Kaneko T."/>
            <person name="Sato S."/>
            <person name="Kotani H."/>
            <person name="Tanaka A."/>
            <person name="Asamizu E."/>
            <person name="Nakamura Y."/>
            <person name="Miyajima N."/>
            <person name="Hirosawa M."/>
            <person name="Sugiura M."/>
            <person name="Sasamoto S."/>
            <person name="Kimura T."/>
            <person name="Hosouchi T."/>
            <person name="Matsuno A."/>
            <person name="Muraki A."/>
            <person name="Nakazaki N."/>
            <person name="Naruo K."/>
            <person name="Okumura S."/>
            <person name="Shimpo S."/>
            <person name="Takeuchi C."/>
            <person name="Wada T."/>
            <person name="Watanabe A."/>
            <person name="Yamada M."/>
            <person name="Yasuda M."/>
            <person name="Tabata S."/>
        </authorList>
    </citation>
    <scope>NUCLEOTIDE SEQUENCE [LARGE SCALE GENOMIC DNA]</scope>
    <source>
        <strain>ATCC 27184 / PCC 6803 / Kazusa</strain>
    </source>
</reference>
<dbReference type="EC" id="4.1.2.13"/>
<dbReference type="EMBL" id="BA000022">
    <property type="protein sequence ID" value="BAA18403.1"/>
    <property type="molecule type" value="Genomic_DNA"/>
</dbReference>
<dbReference type="PIR" id="S76144">
    <property type="entry name" value="S76144"/>
</dbReference>
<dbReference type="SMR" id="P74309"/>
<dbReference type="IntAct" id="P74309">
    <property type="interactions" value="1"/>
</dbReference>
<dbReference type="STRING" id="1148.gene:10499279"/>
<dbReference type="PaxDb" id="1148-1653490"/>
<dbReference type="EnsemblBacteria" id="BAA18403">
    <property type="protein sequence ID" value="BAA18403"/>
    <property type="gene ID" value="BAA18403"/>
</dbReference>
<dbReference type="KEGG" id="syn:slr0943"/>
<dbReference type="eggNOG" id="COG3588">
    <property type="taxonomic scope" value="Bacteria"/>
</dbReference>
<dbReference type="InParanoid" id="P74309"/>
<dbReference type="PhylomeDB" id="P74309"/>
<dbReference type="BioCyc" id="MetaCyc:FBABSYN-MONOMER"/>
<dbReference type="SABIO-RK" id="P74309"/>
<dbReference type="UniPathway" id="UPA00109">
    <property type="reaction ID" value="UER00183"/>
</dbReference>
<dbReference type="Proteomes" id="UP000001425">
    <property type="component" value="Chromosome"/>
</dbReference>
<dbReference type="GO" id="GO:0004332">
    <property type="term" value="F:fructose-bisphosphate aldolase activity"/>
    <property type="evidence" value="ECO:0007669"/>
    <property type="project" value="UniProtKB-UniRule"/>
</dbReference>
<dbReference type="GO" id="GO:0006096">
    <property type="term" value="P:glycolytic process"/>
    <property type="evidence" value="ECO:0007669"/>
    <property type="project" value="UniProtKB-UniRule"/>
</dbReference>
<dbReference type="CDD" id="cd00949">
    <property type="entry name" value="FBP_aldolase_I_bact"/>
    <property type="match status" value="1"/>
</dbReference>
<dbReference type="Gene3D" id="3.20.20.70">
    <property type="entry name" value="Aldolase class I"/>
    <property type="match status" value="1"/>
</dbReference>
<dbReference type="HAMAP" id="MF_00729">
    <property type="entry name" value="FBP_aldolase_1"/>
    <property type="match status" value="1"/>
</dbReference>
<dbReference type="InterPro" id="IPR013785">
    <property type="entry name" value="Aldolase_TIM"/>
</dbReference>
<dbReference type="InterPro" id="IPR000741">
    <property type="entry name" value="FBA_I"/>
</dbReference>
<dbReference type="InterPro" id="IPR023014">
    <property type="entry name" value="FBA_I_Gram+-type"/>
</dbReference>
<dbReference type="NCBIfam" id="NF003784">
    <property type="entry name" value="PRK05377.1"/>
    <property type="match status" value="1"/>
</dbReference>
<dbReference type="PANTHER" id="PTHR11627">
    <property type="entry name" value="FRUCTOSE-BISPHOSPHATE ALDOLASE"/>
    <property type="match status" value="1"/>
</dbReference>
<dbReference type="Pfam" id="PF00274">
    <property type="entry name" value="Glycolytic"/>
    <property type="match status" value="1"/>
</dbReference>
<dbReference type="SUPFAM" id="SSF51569">
    <property type="entry name" value="Aldolase"/>
    <property type="match status" value="1"/>
</dbReference>